<sequence>MSYSYAEKKRIRKEFGVLPHILDVPYLLSIQTESYKKFLTVDAAKGRLHSGLEIVLKQSFPVESKNGQYELHYVDYQIGEPTFDETECQVRGATYDAPLNVKLRLVVYNKDALPNEKIVEDIREEYVYMGDIPLMTTNGTFIINGTERVVVSQLHRSPGAFFSKDDSEEGAFSARIIPYRGSWLDFEFDSKGIIWARIDRKRKFCATVILKALGYTQEQILENFSESKTITFNSKGFALRLDNLSNMKGELLKFDIVDAQDNVIVKKNKKLTSRDVKKIKDAGVDSVAIDFDLVSTLRVAKDIVNEATGEVIAYANDDVTESLLKSCVEVGMLELEVIDFITTERGRYISDTLKYDLTRNTDEALVEIYKVLRPGDPPAAASVKALFEGLFFIESRYSLSDIGRMKLNARLGSDKVSKDIYTLENSDIVGVIEELINIRDGKGKVDDIDHLGNRRVRSVGEMVENQFRIGLYRVEKGIRESMSLVHKDKLMPKDIVNSKPITAAIKEFFTSGALSQFMDQDNPLSEVTHKRRISALGPGGLSRDRAGFEVRDVHATHYGRLCPIETPEGPNIGLINSLASYARVNDYGFLEAPYRKVVDGKVTDEIEYLSAIDEDNYVIAQASTKLDENNHFVEDIIQCRSGGEAIFTESSRVQYMDVSAKQMVSAAAALIPFLEHDDANRVLMGANMQRQAVPTLKSEKPLVGTGMEKIVARDSGNCIIARNVGEVAEVDSNRIVIKVDTEKSQTSNLVDIYSLTKFKRSNKNTCINQRPIVNVGDKVEAGDILADGFATDFGELSLGHNLMVAFMPWNGYNFEDSILLSERIVKDDKYTSIHIEEFTCVARDTKLGPEEITADIPNVSESSLAKLDESGIVHIGANVEAGDILVAKITPKAEQQLTPEERLLRAIFNEKASNVVDSSLRMPSGTSGTVINVQVFENDKGGKSKRALKIEKELIDKARKDFDEEFAVIESVVKSSIEQEVVGAKIQKAKGLKKGAILTKEFLATLPLSKWLEISFEDEKLEEKVQNAREYYEEAKIAIDAKFEAKKKSITQSNELSPGVLKTVKVFVAIKKRIQPGDKMAGRHGNKGVVSRVLPVEDMPYMEDGTPVDVCLNPLGIPSRMNIGQILEAHLGLASYGLGKKIEKTLEKTRKAAELRKTLEEVYNSVGDKKVNLEALNDEEILTLCDNLKGGVPIATPVFDGAKEEDIKSLLKIGGFATNGQMKLFDGRTGKPFDRHVTVGYMYMLKLDHLVDDKMHARSTGSYSLVTQQPLGGKAQFGGQRFGEMEVWALQAYGAAYTLREMLTVKSDDIAGRSKMYKNIVDGKLTMNVDVPESFNVLRNEVRALGIDMDFDYSSEEE</sequence>
<reference key="1">
    <citation type="submission" date="2006-03" db="EMBL/GenBank/DDBJ databases">
        <title>Complete genome sequence of Francisella tularensis LVS (Live Vaccine Strain).</title>
        <authorList>
            <person name="Chain P."/>
            <person name="Larimer F."/>
            <person name="Land M."/>
            <person name="Stilwagen S."/>
            <person name="Larsson P."/>
            <person name="Bearden S."/>
            <person name="Chu M."/>
            <person name="Oyston P."/>
            <person name="Forsman M."/>
            <person name="Andersson S."/>
            <person name="Lindler L."/>
            <person name="Titball R."/>
            <person name="Garcia E."/>
        </authorList>
    </citation>
    <scope>NUCLEOTIDE SEQUENCE [LARGE SCALE GENOMIC DNA]</scope>
    <source>
        <strain>LVS</strain>
    </source>
</reference>
<accession>Q2A1M7</accession>
<gene>
    <name evidence="1" type="primary">rpoB</name>
    <name type="ordered locus">FTL_1744</name>
</gene>
<keyword id="KW-0002">3D-structure</keyword>
<keyword id="KW-0240">DNA-directed RNA polymerase</keyword>
<keyword id="KW-0548">Nucleotidyltransferase</keyword>
<keyword id="KW-1185">Reference proteome</keyword>
<keyword id="KW-0804">Transcription</keyword>
<keyword id="KW-0808">Transferase</keyword>
<feature type="chain" id="PRO_0000300315" description="DNA-directed RNA polymerase subunit beta">
    <location>
        <begin position="1"/>
        <end position="1358"/>
    </location>
</feature>
<feature type="helix" evidence="2">
    <location>
        <begin position="6"/>
        <end position="8"/>
    </location>
</feature>
<feature type="turn" evidence="2">
    <location>
        <begin position="27"/>
        <end position="34"/>
    </location>
</feature>
<feature type="helix" evidence="2">
    <location>
        <begin position="35"/>
        <end position="39"/>
    </location>
</feature>
<feature type="turn" evidence="2">
    <location>
        <begin position="43"/>
        <end position="46"/>
    </location>
</feature>
<feature type="helix" evidence="2">
    <location>
        <begin position="53"/>
        <end position="57"/>
    </location>
</feature>
<feature type="strand" evidence="2">
    <location>
        <begin position="65"/>
        <end position="68"/>
    </location>
</feature>
<feature type="strand" evidence="2">
    <location>
        <begin position="72"/>
        <end position="78"/>
    </location>
</feature>
<feature type="helix" evidence="2">
    <location>
        <begin position="85"/>
        <end position="91"/>
    </location>
</feature>
<feature type="strand" evidence="2">
    <location>
        <begin position="96"/>
        <end position="104"/>
    </location>
</feature>
<feature type="strand" evidence="2">
    <location>
        <begin position="112"/>
        <end position="114"/>
    </location>
</feature>
<feature type="strand" evidence="2">
    <location>
        <begin position="118"/>
        <end position="120"/>
    </location>
</feature>
<feature type="strand" evidence="2">
    <location>
        <begin position="124"/>
        <end position="133"/>
    </location>
</feature>
<feature type="strand" evidence="2">
    <location>
        <begin position="137"/>
        <end position="139"/>
    </location>
</feature>
<feature type="strand" evidence="2">
    <location>
        <begin position="141"/>
        <end position="145"/>
    </location>
</feature>
<feature type="strand" evidence="2">
    <location>
        <begin position="147"/>
        <end position="150"/>
    </location>
</feature>
<feature type="strand" evidence="2">
    <location>
        <begin position="152"/>
        <end position="156"/>
    </location>
</feature>
<feature type="strand" evidence="2">
    <location>
        <begin position="158"/>
        <end position="161"/>
    </location>
</feature>
<feature type="strand" evidence="2">
    <location>
        <begin position="167"/>
        <end position="170"/>
    </location>
</feature>
<feature type="strand" evidence="2">
    <location>
        <begin position="173"/>
        <end position="177"/>
    </location>
</feature>
<feature type="strand" evidence="2">
    <location>
        <begin position="179"/>
        <end position="181"/>
    </location>
</feature>
<feature type="strand" evidence="2">
    <location>
        <begin position="184"/>
        <end position="187"/>
    </location>
</feature>
<feature type="strand" evidence="2">
    <location>
        <begin position="195"/>
        <end position="197"/>
    </location>
</feature>
<feature type="helix" evidence="2">
    <location>
        <begin position="206"/>
        <end position="209"/>
    </location>
</feature>
<feature type="helix" evidence="2">
    <location>
        <begin position="210"/>
        <end position="212"/>
    </location>
</feature>
<feature type="helix" evidence="2">
    <location>
        <begin position="217"/>
        <end position="220"/>
    </location>
</feature>
<feature type="helix" evidence="2">
    <location>
        <begin position="350"/>
        <end position="353"/>
    </location>
</feature>
<feature type="helix" evidence="2">
    <location>
        <begin position="361"/>
        <end position="372"/>
    </location>
</feature>
<feature type="strand" evidence="2">
    <location>
        <begin position="380"/>
        <end position="382"/>
    </location>
</feature>
<feature type="helix" evidence="2">
    <location>
        <begin position="383"/>
        <end position="388"/>
    </location>
</feature>
<feature type="turn" evidence="2">
    <location>
        <begin position="394"/>
        <end position="396"/>
    </location>
</feature>
<feature type="turn" evidence="2">
    <location>
        <begin position="400"/>
        <end position="402"/>
    </location>
</feature>
<feature type="helix" evidence="2">
    <location>
        <begin position="403"/>
        <end position="410"/>
    </location>
</feature>
<feature type="helix" evidence="2">
    <location>
        <begin position="426"/>
        <end position="439"/>
    </location>
</feature>
<feature type="strand" evidence="3">
    <location>
        <begin position="448"/>
        <end position="450"/>
    </location>
</feature>
<feature type="strand" evidence="2">
    <location>
        <begin position="453"/>
        <end position="457"/>
    </location>
</feature>
<feature type="helix" evidence="2">
    <location>
        <begin position="459"/>
        <end position="481"/>
    </location>
</feature>
<feature type="strand" evidence="3">
    <location>
        <begin position="487"/>
        <end position="489"/>
    </location>
</feature>
<feature type="helix" evidence="2">
    <location>
        <begin position="499"/>
        <end position="511"/>
    </location>
</feature>
<feature type="strand" evidence="2">
    <location>
        <begin position="513"/>
        <end position="517"/>
    </location>
</feature>
<feature type="helix" evidence="2">
    <location>
        <begin position="523"/>
        <end position="529"/>
    </location>
</feature>
<feature type="strand" evidence="2">
    <location>
        <begin position="533"/>
        <end position="535"/>
    </location>
</feature>
<feature type="turn" evidence="2">
    <location>
        <begin position="543"/>
        <end position="545"/>
    </location>
</feature>
<feature type="helix" evidence="2">
    <location>
        <begin position="555"/>
        <end position="557"/>
    </location>
</feature>
<feature type="turn" evidence="2">
    <location>
        <begin position="558"/>
        <end position="560"/>
    </location>
</feature>
<feature type="turn" evidence="2">
    <location>
        <begin position="570"/>
        <end position="573"/>
    </location>
</feature>
<feature type="strand" evidence="2">
    <location>
        <begin position="590"/>
        <end position="598"/>
    </location>
</feature>
<feature type="strand" evidence="2">
    <location>
        <begin position="601"/>
        <end position="610"/>
    </location>
</feature>
<feature type="turn" evidence="2">
    <location>
        <begin position="611"/>
        <end position="613"/>
    </location>
</feature>
<feature type="helix" evidence="2">
    <location>
        <begin position="614"/>
        <end position="616"/>
    </location>
</feature>
<feature type="strand" evidence="2">
    <location>
        <begin position="628"/>
        <end position="630"/>
    </location>
</feature>
<feature type="strand" evidence="2">
    <location>
        <begin position="635"/>
        <end position="649"/>
    </location>
</feature>
<feature type="helix" evidence="2">
    <location>
        <begin position="650"/>
        <end position="652"/>
    </location>
</feature>
<feature type="strand" evidence="2">
    <location>
        <begin position="660"/>
        <end position="664"/>
    </location>
</feature>
<feature type="strand" evidence="2">
    <location>
        <begin position="666"/>
        <end position="668"/>
    </location>
</feature>
<feature type="strand" evidence="2">
    <location>
        <begin position="671"/>
        <end position="673"/>
    </location>
</feature>
<feature type="helix" evidence="3">
    <location>
        <begin position="674"/>
        <end position="676"/>
    </location>
</feature>
<feature type="helix" evidence="2">
    <location>
        <begin position="679"/>
        <end position="688"/>
    </location>
</feature>
<feature type="strand" evidence="2">
    <location>
        <begin position="702"/>
        <end position="704"/>
    </location>
</feature>
<feature type="helix" evidence="2">
    <location>
        <begin position="708"/>
        <end position="713"/>
    </location>
</feature>
<feature type="turn" evidence="2">
    <location>
        <begin position="714"/>
        <end position="716"/>
    </location>
</feature>
<feature type="strand" evidence="2">
    <location>
        <begin position="717"/>
        <end position="720"/>
    </location>
</feature>
<feature type="strand" evidence="2">
    <location>
        <begin position="725"/>
        <end position="730"/>
    </location>
</feature>
<feature type="strand" evidence="2">
    <location>
        <begin position="732"/>
        <end position="737"/>
    </location>
</feature>
<feature type="turn" evidence="2">
    <location>
        <begin position="741"/>
        <end position="743"/>
    </location>
</feature>
<feature type="strand" evidence="3">
    <location>
        <begin position="744"/>
        <end position="746"/>
    </location>
</feature>
<feature type="strand" evidence="2">
    <location>
        <begin position="751"/>
        <end position="754"/>
    </location>
</feature>
<feature type="strand" evidence="2">
    <location>
        <begin position="758"/>
        <end position="760"/>
    </location>
</feature>
<feature type="turn" evidence="3">
    <location>
        <begin position="762"/>
        <end position="764"/>
    </location>
</feature>
<feature type="strand" evidence="2">
    <location>
        <begin position="784"/>
        <end position="787"/>
    </location>
</feature>
<feature type="strand" evidence="2">
    <location>
        <begin position="791"/>
        <end position="796"/>
    </location>
</feature>
<feature type="strand" evidence="2">
    <location>
        <begin position="799"/>
        <end position="801"/>
    </location>
</feature>
<feature type="strand" evidence="2">
    <location>
        <begin position="804"/>
        <end position="807"/>
    </location>
</feature>
<feature type="strand" evidence="2">
    <location>
        <begin position="810"/>
        <end position="816"/>
    </location>
</feature>
<feature type="strand" evidence="2">
    <location>
        <begin position="818"/>
        <end position="820"/>
    </location>
</feature>
<feature type="helix" evidence="2">
    <location>
        <begin position="823"/>
        <end position="826"/>
    </location>
</feature>
<feature type="turn" evidence="2">
    <location>
        <begin position="827"/>
        <end position="830"/>
    </location>
</feature>
<feature type="strand" evidence="2">
    <location>
        <begin position="832"/>
        <end position="843"/>
    </location>
</feature>
<feature type="helix" evidence="2">
    <location>
        <begin position="862"/>
        <end position="864"/>
    </location>
</feature>
<feature type="strand" evidence="2">
    <location>
        <begin position="865"/>
        <end position="867"/>
    </location>
</feature>
<feature type="strand" evidence="2">
    <location>
        <begin position="869"/>
        <end position="873"/>
    </location>
</feature>
<feature type="strand" evidence="2">
    <location>
        <begin position="884"/>
        <end position="886"/>
    </location>
</feature>
<feature type="strand" evidence="2">
    <location>
        <begin position="889"/>
        <end position="891"/>
    </location>
</feature>
<feature type="helix" evidence="2">
    <location>
        <begin position="899"/>
        <end position="904"/>
    </location>
</feature>
<feature type="turn" evidence="2">
    <location>
        <begin position="906"/>
        <end position="909"/>
    </location>
</feature>
<feature type="strand" evidence="2">
    <location>
        <begin position="914"/>
        <end position="917"/>
    </location>
</feature>
<feature type="strand" evidence="2">
    <location>
        <begin position="928"/>
        <end position="936"/>
    </location>
</feature>
<feature type="strand" evidence="3">
    <location>
        <begin position="939"/>
        <end position="941"/>
    </location>
</feature>
<feature type="helix" evidence="2">
    <location>
        <begin position="947"/>
        <end position="977"/>
    </location>
</feature>
<feature type="turn" evidence="2">
    <location>
        <begin position="978"/>
        <end position="982"/>
    </location>
</feature>
<feature type="strand" evidence="2">
    <location>
        <begin position="1026"/>
        <end position="1031"/>
    </location>
</feature>
<feature type="helix" evidence="2">
    <location>
        <begin position="1032"/>
        <end position="1045"/>
    </location>
</feature>
<feature type="strand" evidence="2">
    <location>
        <begin position="1049"/>
        <end position="1054"/>
    </location>
</feature>
<feature type="strand" evidence="2">
    <location>
        <begin position="1060"/>
        <end position="1072"/>
    </location>
</feature>
<feature type="strand" evidence="2">
    <location>
        <begin position="1079"/>
        <end position="1082"/>
    </location>
</feature>
<feature type="strand" evidence="2">
    <location>
        <begin position="1087"/>
        <end position="1093"/>
    </location>
</feature>
<feature type="helix" evidence="3">
    <location>
        <begin position="1096"/>
        <end position="1098"/>
    </location>
</feature>
<feature type="strand" evidence="3">
    <location>
        <begin position="1101"/>
        <end position="1105"/>
    </location>
</feature>
<feature type="strand" evidence="2">
    <location>
        <begin position="1109"/>
        <end position="1111"/>
    </location>
</feature>
<feature type="helix" evidence="2">
    <location>
        <begin position="1116"/>
        <end position="1119"/>
    </location>
</feature>
<feature type="helix" evidence="2">
    <location>
        <begin position="1124"/>
        <end position="1146"/>
    </location>
</feature>
<feature type="helix" evidence="2">
    <location>
        <begin position="1155"/>
        <end position="1163"/>
    </location>
</feature>
<feature type="strand" evidence="2">
    <location>
        <begin position="1164"/>
        <end position="1168"/>
    </location>
</feature>
<feature type="helix" evidence="2">
    <location>
        <begin position="1173"/>
        <end position="1175"/>
    </location>
</feature>
<feature type="helix" evidence="2">
    <location>
        <begin position="1178"/>
        <end position="1187"/>
    </location>
</feature>
<feature type="strand" evidence="2">
    <location>
        <begin position="1198"/>
        <end position="1200"/>
    </location>
</feature>
<feature type="helix" evidence="2">
    <location>
        <begin position="1204"/>
        <end position="1214"/>
    </location>
</feature>
<feature type="strand" evidence="2">
    <location>
        <begin position="1218"/>
        <end position="1222"/>
    </location>
</feature>
<feature type="turn" evidence="2">
    <location>
        <begin position="1227"/>
        <end position="1229"/>
    </location>
</feature>
<feature type="strand" evidence="2">
    <location>
        <begin position="1237"/>
        <end position="1240"/>
    </location>
</feature>
<feature type="strand" evidence="2">
    <location>
        <begin position="1243"/>
        <end position="1248"/>
    </location>
</feature>
<feature type="helix" evidence="2">
    <location>
        <begin position="1251"/>
        <end position="1253"/>
    </location>
</feature>
<feature type="strand" evidence="2">
    <location>
        <begin position="1257"/>
        <end position="1260"/>
    </location>
</feature>
<feature type="strand" evidence="2">
    <location>
        <begin position="1265"/>
        <end position="1267"/>
    </location>
</feature>
<feature type="strand" evidence="2">
    <location>
        <begin position="1273"/>
        <end position="1276"/>
    </location>
</feature>
<feature type="helix" evidence="2">
    <location>
        <begin position="1285"/>
        <end position="1293"/>
    </location>
</feature>
<feature type="helix" evidence="2">
    <location>
        <begin position="1296"/>
        <end position="1301"/>
    </location>
</feature>
<feature type="turn" evidence="2">
    <location>
        <begin position="1302"/>
        <end position="1308"/>
    </location>
</feature>
<feature type="helix" evidence="2">
    <location>
        <begin position="1310"/>
        <end position="1322"/>
    </location>
</feature>
<feature type="helix" evidence="2">
    <location>
        <begin position="1333"/>
        <end position="1342"/>
    </location>
</feature>
<feature type="turn" evidence="2">
    <location>
        <begin position="1343"/>
        <end position="1346"/>
    </location>
</feature>
<feature type="strand" evidence="2">
    <location>
        <begin position="1347"/>
        <end position="1352"/>
    </location>
</feature>
<name>RPOB_FRATH</name>
<evidence type="ECO:0000255" key="1">
    <source>
        <dbReference type="HAMAP-Rule" id="MF_01321"/>
    </source>
</evidence>
<evidence type="ECO:0007829" key="2">
    <source>
        <dbReference type="PDB" id="6WMP"/>
    </source>
</evidence>
<evidence type="ECO:0007829" key="3">
    <source>
        <dbReference type="PDB" id="6WMR"/>
    </source>
</evidence>
<comment type="function">
    <text evidence="1">DNA-dependent RNA polymerase catalyzes the transcription of DNA into RNA using the four ribonucleoside triphosphates as substrates.</text>
</comment>
<comment type="catalytic activity">
    <reaction evidence="1">
        <text>RNA(n) + a ribonucleoside 5'-triphosphate = RNA(n+1) + diphosphate</text>
        <dbReference type="Rhea" id="RHEA:21248"/>
        <dbReference type="Rhea" id="RHEA-COMP:14527"/>
        <dbReference type="Rhea" id="RHEA-COMP:17342"/>
        <dbReference type="ChEBI" id="CHEBI:33019"/>
        <dbReference type="ChEBI" id="CHEBI:61557"/>
        <dbReference type="ChEBI" id="CHEBI:140395"/>
        <dbReference type="EC" id="2.7.7.6"/>
    </reaction>
</comment>
<comment type="subunit">
    <text evidence="1">The RNAP catalytic core consists of 2 alpha, 1 beta, 1 beta' and 1 omega subunit. When a sigma factor is associated with the core the holoenzyme is formed, which can initiate transcription.</text>
</comment>
<comment type="similarity">
    <text evidence="1">Belongs to the RNA polymerase beta chain family.</text>
</comment>
<protein>
    <recommendedName>
        <fullName evidence="1">DNA-directed RNA polymerase subunit beta</fullName>
        <shortName evidence="1">RNAP subunit beta</shortName>
        <ecNumber evidence="1">2.7.7.6</ecNumber>
    </recommendedName>
    <alternativeName>
        <fullName evidence="1">RNA polymerase subunit beta</fullName>
    </alternativeName>
    <alternativeName>
        <fullName evidence="1">Transcriptase subunit beta</fullName>
    </alternativeName>
</protein>
<organism>
    <name type="scientific">Francisella tularensis subsp. holarctica (strain LVS)</name>
    <dbReference type="NCBI Taxonomy" id="376619"/>
    <lineage>
        <taxon>Bacteria</taxon>
        <taxon>Pseudomonadati</taxon>
        <taxon>Pseudomonadota</taxon>
        <taxon>Gammaproteobacteria</taxon>
        <taxon>Thiotrichales</taxon>
        <taxon>Francisellaceae</taxon>
        <taxon>Francisella</taxon>
    </lineage>
</organism>
<proteinExistence type="evidence at protein level"/>
<dbReference type="EC" id="2.7.7.6" evidence="1"/>
<dbReference type="EMBL" id="AM233362">
    <property type="protein sequence ID" value="CAJ80183.1"/>
    <property type="molecule type" value="Genomic_DNA"/>
</dbReference>
<dbReference type="RefSeq" id="WP_011457525.1">
    <property type="nucleotide sequence ID" value="NZ_CP009694.1"/>
</dbReference>
<dbReference type="PDB" id="6WMP">
    <property type="method" value="EM"/>
    <property type="resolution" value="2.98 A"/>
    <property type="chains" value="C=1-1358"/>
</dbReference>
<dbReference type="PDB" id="6WMR">
    <property type="method" value="EM"/>
    <property type="resolution" value="3.46 A"/>
    <property type="chains" value="C=1-1358"/>
</dbReference>
<dbReference type="PDB" id="6WMT">
    <property type="method" value="EM"/>
    <property type="resolution" value="4.43 A"/>
    <property type="chains" value="C=1-1358"/>
</dbReference>
<dbReference type="PDBsum" id="6WMP"/>
<dbReference type="PDBsum" id="6WMR"/>
<dbReference type="PDBsum" id="6WMT"/>
<dbReference type="EMDB" id="EMD-21850"/>
<dbReference type="EMDB" id="EMD-21851"/>
<dbReference type="EMDB" id="EMD-21852"/>
<dbReference type="SMR" id="Q2A1M7"/>
<dbReference type="KEGG" id="ftl:FTL_1744"/>
<dbReference type="Proteomes" id="UP000001944">
    <property type="component" value="Chromosome"/>
</dbReference>
<dbReference type="GO" id="GO:0000428">
    <property type="term" value="C:DNA-directed RNA polymerase complex"/>
    <property type="evidence" value="ECO:0007669"/>
    <property type="project" value="UniProtKB-KW"/>
</dbReference>
<dbReference type="GO" id="GO:0003677">
    <property type="term" value="F:DNA binding"/>
    <property type="evidence" value="ECO:0007669"/>
    <property type="project" value="UniProtKB-UniRule"/>
</dbReference>
<dbReference type="GO" id="GO:0003899">
    <property type="term" value="F:DNA-directed RNA polymerase activity"/>
    <property type="evidence" value="ECO:0007669"/>
    <property type="project" value="UniProtKB-UniRule"/>
</dbReference>
<dbReference type="GO" id="GO:0032549">
    <property type="term" value="F:ribonucleoside binding"/>
    <property type="evidence" value="ECO:0007669"/>
    <property type="project" value="InterPro"/>
</dbReference>
<dbReference type="GO" id="GO:0006351">
    <property type="term" value="P:DNA-templated transcription"/>
    <property type="evidence" value="ECO:0007669"/>
    <property type="project" value="UniProtKB-UniRule"/>
</dbReference>
<dbReference type="CDD" id="cd00653">
    <property type="entry name" value="RNA_pol_B_RPB2"/>
    <property type="match status" value="1"/>
</dbReference>
<dbReference type="FunFam" id="3.90.1800.10:FF:000001">
    <property type="entry name" value="DNA-directed RNA polymerase subunit beta"/>
    <property type="match status" value="1"/>
</dbReference>
<dbReference type="Gene3D" id="2.40.50.100">
    <property type="match status" value="1"/>
</dbReference>
<dbReference type="Gene3D" id="2.40.50.150">
    <property type="match status" value="1"/>
</dbReference>
<dbReference type="Gene3D" id="3.90.1100.10">
    <property type="match status" value="2"/>
</dbReference>
<dbReference type="Gene3D" id="2.30.150.10">
    <property type="entry name" value="DNA-directed RNA polymerase, beta subunit, external 1 domain"/>
    <property type="match status" value="1"/>
</dbReference>
<dbReference type="Gene3D" id="2.40.270.10">
    <property type="entry name" value="DNA-directed RNA polymerase, subunit 2, domain 6"/>
    <property type="match status" value="2"/>
</dbReference>
<dbReference type="Gene3D" id="3.90.1800.10">
    <property type="entry name" value="RNA polymerase alpha subunit dimerisation domain"/>
    <property type="match status" value="1"/>
</dbReference>
<dbReference type="Gene3D" id="3.90.1110.10">
    <property type="entry name" value="RNA polymerase Rpb2, domain 2"/>
    <property type="match status" value="2"/>
</dbReference>
<dbReference type="HAMAP" id="MF_01321">
    <property type="entry name" value="RNApol_bact_RpoB"/>
    <property type="match status" value="1"/>
</dbReference>
<dbReference type="InterPro" id="IPR042107">
    <property type="entry name" value="DNA-dir_RNA_pol_bsu_ext_1_sf"/>
</dbReference>
<dbReference type="InterPro" id="IPR019462">
    <property type="entry name" value="DNA-dir_RNA_pol_bsu_external_1"/>
</dbReference>
<dbReference type="InterPro" id="IPR015712">
    <property type="entry name" value="DNA-dir_RNA_pol_su2"/>
</dbReference>
<dbReference type="InterPro" id="IPR007120">
    <property type="entry name" value="DNA-dir_RNAP_su2_dom"/>
</dbReference>
<dbReference type="InterPro" id="IPR037033">
    <property type="entry name" value="DNA-dir_RNAP_su2_hyb_sf"/>
</dbReference>
<dbReference type="InterPro" id="IPR010243">
    <property type="entry name" value="RNA_pol_bsu_bac"/>
</dbReference>
<dbReference type="InterPro" id="IPR007121">
    <property type="entry name" value="RNA_pol_bsu_CS"/>
</dbReference>
<dbReference type="InterPro" id="IPR007644">
    <property type="entry name" value="RNA_pol_bsu_protrusion"/>
</dbReference>
<dbReference type="InterPro" id="IPR007642">
    <property type="entry name" value="RNA_pol_Rpb2_2"/>
</dbReference>
<dbReference type="InterPro" id="IPR037034">
    <property type="entry name" value="RNA_pol_Rpb2_2_sf"/>
</dbReference>
<dbReference type="InterPro" id="IPR007645">
    <property type="entry name" value="RNA_pol_Rpb2_3"/>
</dbReference>
<dbReference type="InterPro" id="IPR007641">
    <property type="entry name" value="RNA_pol_Rpb2_7"/>
</dbReference>
<dbReference type="InterPro" id="IPR014724">
    <property type="entry name" value="RNA_pol_RPB2_OB-fold"/>
</dbReference>
<dbReference type="NCBIfam" id="NF001616">
    <property type="entry name" value="PRK00405.1"/>
    <property type="match status" value="1"/>
</dbReference>
<dbReference type="NCBIfam" id="TIGR02013">
    <property type="entry name" value="rpoB"/>
    <property type="match status" value="1"/>
</dbReference>
<dbReference type="PANTHER" id="PTHR20856">
    <property type="entry name" value="DNA-DIRECTED RNA POLYMERASE I SUBUNIT 2"/>
    <property type="match status" value="1"/>
</dbReference>
<dbReference type="Pfam" id="PF04563">
    <property type="entry name" value="RNA_pol_Rpb2_1"/>
    <property type="match status" value="1"/>
</dbReference>
<dbReference type="Pfam" id="PF04561">
    <property type="entry name" value="RNA_pol_Rpb2_2"/>
    <property type="match status" value="2"/>
</dbReference>
<dbReference type="Pfam" id="PF04565">
    <property type="entry name" value="RNA_pol_Rpb2_3"/>
    <property type="match status" value="1"/>
</dbReference>
<dbReference type="Pfam" id="PF10385">
    <property type="entry name" value="RNA_pol_Rpb2_45"/>
    <property type="match status" value="1"/>
</dbReference>
<dbReference type="Pfam" id="PF00562">
    <property type="entry name" value="RNA_pol_Rpb2_6"/>
    <property type="match status" value="1"/>
</dbReference>
<dbReference type="Pfam" id="PF04560">
    <property type="entry name" value="RNA_pol_Rpb2_7"/>
    <property type="match status" value="1"/>
</dbReference>
<dbReference type="SUPFAM" id="SSF64484">
    <property type="entry name" value="beta and beta-prime subunits of DNA dependent RNA-polymerase"/>
    <property type="match status" value="1"/>
</dbReference>
<dbReference type="PROSITE" id="PS01166">
    <property type="entry name" value="RNA_POL_BETA"/>
    <property type="match status" value="1"/>
</dbReference>